<name>RIBA_NEIG1</name>
<organism>
    <name type="scientific">Neisseria gonorrhoeae (strain ATCC 700825 / FA 1090)</name>
    <dbReference type="NCBI Taxonomy" id="242231"/>
    <lineage>
        <taxon>Bacteria</taxon>
        <taxon>Pseudomonadati</taxon>
        <taxon>Pseudomonadota</taxon>
        <taxon>Betaproteobacteria</taxon>
        <taxon>Neisseriales</taxon>
        <taxon>Neisseriaceae</taxon>
        <taxon>Neisseria</taxon>
    </lineage>
</organism>
<proteinExistence type="inferred from homology"/>
<evidence type="ECO:0000255" key="1">
    <source>
        <dbReference type="HAMAP-Rule" id="MF_00179"/>
    </source>
</evidence>
<sequence length="197" mass="21854">MSELLDHVASCRLPTEWGVFTMHGFEEANGQEHVALTVGNCSDGNPVLTRIHSECLTGDALFSRKCDCGPQLEAAMRAVQAEGRGIIVYLRQEGRGIGLINKIRAYHLQEQGMDTVEANLALGLPVDARDFRLAQSIYEYLGIRSVKLLTNNPEKIQTLKDAGINVVERIPLHVGENLENERYLQTKADKLGHLMSE</sequence>
<reference key="1">
    <citation type="submission" date="2003-03" db="EMBL/GenBank/DDBJ databases">
        <title>The complete genome sequence of Neisseria gonorrhoeae.</title>
        <authorList>
            <person name="Lewis L.A."/>
            <person name="Gillaspy A.F."/>
            <person name="McLaughlin R.E."/>
            <person name="Gipson M."/>
            <person name="Ducey T.F."/>
            <person name="Ownbey T."/>
            <person name="Hartman K."/>
            <person name="Nydick C."/>
            <person name="Carson M.B."/>
            <person name="Vaughn J."/>
            <person name="Thomson C."/>
            <person name="Song L."/>
            <person name="Lin S."/>
            <person name="Yuan X."/>
            <person name="Najar F."/>
            <person name="Zhan M."/>
            <person name="Ren Q."/>
            <person name="Zhu H."/>
            <person name="Qi S."/>
            <person name="Kenton S.M."/>
            <person name="Lai H."/>
            <person name="White J.D."/>
            <person name="Clifton S."/>
            <person name="Roe B.A."/>
            <person name="Dyer D.W."/>
        </authorList>
    </citation>
    <scope>NUCLEOTIDE SEQUENCE [LARGE SCALE GENOMIC DNA]</scope>
    <source>
        <strain>ATCC 700825 / FA 1090</strain>
    </source>
</reference>
<feature type="chain" id="PRO_0000151763" description="GTP cyclohydrolase-2">
    <location>
        <begin position="1"/>
        <end position="197"/>
    </location>
</feature>
<feature type="active site" description="Proton acceptor" evidence="1">
    <location>
        <position position="127"/>
    </location>
</feature>
<feature type="active site" description="Nucleophile" evidence="1">
    <location>
        <position position="129"/>
    </location>
</feature>
<feature type="binding site" evidence="1">
    <location>
        <begin position="50"/>
        <end position="54"/>
    </location>
    <ligand>
        <name>GTP</name>
        <dbReference type="ChEBI" id="CHEBI:37565"/>
    </ligand>
</feature>
<feature type="binding site" evidence="1">
    <location>
        <position position="55"/>
    </location>
    <ligand>
        <name>Zn(2+)</name>
        <dbReference type="ChEBI" id="CHEBI:29105"/>
        <note>catalytic</note>
    </ligand>
</feature>
<feature type="binding site" evidence="1">
    <location>
        <position position="66"/>
    </location>
    <ligand>
        <name>Zn(2+)</name>
        <dbReference type="ChEBI" id="CHEBI:29105"/>
        <note>catalytic</note>
    </ligand>
</feature>
<feature type="binding site" evidence="1">
    <location>
        <position position="68"/>
    </location>
    <ligand>
        <name>Zn(2+)</name>
        <dbReference type="ChEBI" id="CHEBI:29105"/>
        <note>catalytic</note>
    </ligand>
</feature>
<feature type="binding site" evidence="1">
    <location>
        <position position="71"/>
    </location>
    <ligand>
        <name>GTP</name>
        <dbReference type="ChEBI" id="CHEBI:37565"/>
    </ligand>
</feature>
<feature type="binding site" evidence="1">
    <location>
        <begin position="93"/>
        <end position="95"/>
    </location>
    <ligand>
        <name>GTP</name>
        <dbReference type="ChEBI" id="CHEBI:37565"/>
    </ligand>
</feature>
<feature type="binding site" evidence="1">
    <location>
        <position position="115"/>
    </location>
    <ligand>
        <name>GTP</name>
        <dbReference type="ChEBI" id="CHEBI:37565"/>
    </ligand>
</feature>
<feature type="binding site" evidence="1">
    <location>
        <position position="150"/>
    </location>
    <ligand>
        <name>GTP</name>
        <dbReference type="ChEBI" id="CHEBI:37565"/>
    </ligand>
</feature>
<feature type="binding site" evidence="1">
    <location>
        <position position="155"/>
    </location>
    <ligand>
        <name>GTP</name>
        <dbReference type="ChEBI" id="CHEBI:37565"/>
    </ligand>
</feature>
<gene>
    <name evidence="1" type="primary">ribA</name>
    <name type="ordered locus">NGO_1134</name>
</gene>
<accession>Q5F7N6</accession>
<protein>
    <recommendedName>
        <fullName evidence="1">GTP cyclohydrolase-2</fullName>
        <ecNumber evidence="1">3.5.4.25</ecNumber>
    </recommendedName>
    <alternativeName>
        <fullName evidence="1">GTP cyclohydrolase II</fullName>
    </alternativeName>
</protein>
<dbReference type="EC" id="3.5.4.25" evidence="1"/>
<dbReference type="EMBL" id="AE004969">
    <property type="protein sequence ID" value="AAW89801.1"/>
    <property type="molecule type" value="Genomic_DNA"/>
</dbReference>
<dbReference type="RefSeq" id="WP_003689161.1">
    <property type="nucleotide sequence ID" value="NC_002946.2"/>
</dbReference>
<dbReference type="RefSeq" id="YP_208213.1">
    <property type="nucleotide sequence ID" value="NC_002946.2"/>
</dbReference>
<dbReference type="SMR" id="Q5F7N6"/>
<dbReference type="STRING" id="242231.NGO_1134"/>
<dbReference type="GeneID" id="66753459"/>
<dbReference type="KEGG" id="ngo:NGO_1134"/>
<dbReference type="PATRIC" id="fig|242231.10.peg.1329"/>
<dbReference type="HOGENOM" id="CLU_020273_2_1_4"/>
<dbReference type="UniPathway" id="UPA00275">
    <property type="reaction ID" value="UER00400"/>
</dbReference>
<dbReference type="Proteomes" id="UP000000535">
    <property type="component" value="Chromosome"/>
</dbReference>
<dbReference type="GO" id="GO:0005829">
    <property type="term" value="C:cytosol"/>
    <property type="evidence" value="ECO:0007669"/>
    <property type="project" value="TreeGrafter"/>
</dbReference>
<dbReference type="GO" id="GO:0005525">
    <property type="term" value="F:GTP binding"/>
    <property type="evidence" value="ECO:0007669"/>
    <property type="project" value="UniProtKB-KW"/>
</dbReference>
<dbReference type="GO" id="GO:0003935">
    <property type="term" value="F:GTP cyclohydrolase II activity"/>
    <property type="evidence" value="ECO:0007669"/>
    <property type="project" value="UniProtKB-UniRule"/>
</dbReference>
<dbReference type="GO" id="GO:0008270">
    <property type="term" value="F:zinc ion binding"/>
    <property type="evidence" value="ECO:0007669"/>
    <property type="project" value="UniProtKB-UniRule"/>
</dbReference>
<dbReference type="GO" id="GO:0009231">
    <property type="term" value="P:riboflavin biosynthetic process"/>
    <property type="evidence" value="ECO:0007669"/>
    <property type="project" value="UniProtKB-UniRule"/>
</dbReference>
<dbReference type="CDD" id="cd00641">
    <property type="entry name" value="GTP_cyclohydro2"/>
    <property type="match status" value="1"/>
</dbReference>
<dbReference type="FunFam" id="3.40.50.10990:FF:000002">
    <property type="entry name" value="GTP cyclohydrolase-2"/>
    <property type="match status" value="1"/>
</dbReference>
<dbReference type="Gene3D" id="3.40.50.10990">
    <property type="entry name" value="GTP cyclohydrolase II"/>
    <property type="match status" value="1"/>
</dbReference>
<dbReference type="HAMAP" id="MF_00179">
    <property type="entry name" value="RibA"/>
    <property type="match status" value="1"/>
</dbReference>
<dbReference type="InterPro" id="IPR032677">
    <property type="entry name" value="GTP_cyclohydro_II"/>
</dbReference>
<dbReference type="InterPro" id="IPR000926">
    <property type="entry name" value="RibA"/>
</dbReference>
<dbReference type="InterPro" id="IPR036144">
    <property type="entry name" value="RibA-like_sf"/>
</dbReference>
<dbReference type="NCBIfam" id="NF001591">
    <property type="entry name" value="PRK00393.1"/>
    <property type="match status" value="1"/>
</dbReference>
<dbReference type="NCBIfam" id="TIGR00505">
    <property type="entry name" value="ribA"/>
    <property type="match status" value="1"/>
</dbReference>
<dbReference type="PANTHER" id="PTHR21327:SF18">
    <property type="entry name" value="3,4-DIHYDROXY-2-BUTANONE 4-PHOSPHATE SYNTHASE"/>
    <property type="match status" value="1"/>
</dbReference>
<dbReference type="PANTHER" id="PTHR21327">
    <property type="entry name" value="GTP CYCLOHYDROLASE II-RELATED"/>
    <property type="match status" value="1"/>
</dbReference>
<dbReference type="Pfam" id="PF00925">
    <property type="entry name" value="GTP_cyclohydro2"/>
    <property type="match status" value="1"/>
</dbReference>
<dbReference type="SUPFAM" id="SSF142695">
    <property type="entry name" value="RibA-like"/>
    <property type="match status" value="1"/>
</dbReference>
<comment type="function">
    <text evidence="1">Catalyzes the conversion of GTP to 2,5-diamino-6-ribosylamino-4(3H)-pyrimidinone 5'-phosphate (DARP), formate and pyrophosphate.</text>
</comment>
<comment type="catalytic activity">
    <reaction evidence="1">
        <text>GTP + 4 H2O = 2,5-diamino-6-hydroxy-4-(5-phosphoribosylamino)-pyrimidine + formate + 2 phosphate + 3 H(+)</text>
        <dbReference type="Rhea" id="RHEA:23704"/>
        <dbReference type="ChEBI" id="CHEBI:15377"/>
        <dbReference type="ChEBI" id="CHEBI:15378"/>
        <dbReference type="ChEBI" id="CHEBI:15740"/>
        <dbReference type="ChEBI" id="CHEBI:37565"/>
        <dbReference type="ChEBI" id="CHEBI:43474"/>
        <dbReference type="ChEBI" id="CHEBI:58614"/>
        <dbReference type="EC" id="3.5.4.25"/>
    </reaction>
</comment>
<comment type="cofactor">
    <cofactor evidence="1">
        <name>Zn(2+)</name>
        <dbReference type="ChEBI" id="CHEBI:29105"/>
    </cofactor>
    <text evidence="1">Binds 1 zinc ion per subunit.</text>
</comment>
<comment type="pathway">
    <text evidence="1">Cofactor biosynthesis; riboflavin biosynthesis; 5-amino-6-(D-ribitylamino)uracil from GTP: step 1/4.</text>
</comment>
<comment type="similarity">
    <text evidence="1">Belongs to the GTP cyclohydrolase II family.</text>
</comment>
<keyword id="KW-0342">GTP-binding</keyword>
<keyword id="KW-0378">Hydrolase</keyword>
<keyword id="KW-0479">Metal-binding</keyword>
<keyword id="KW-0547">Nucleotide-binding</keyword>
<keyword id="KW-1185">Reference proteome</keyword>
<keyword id="KW-0686">Riboflavin biosynthesis</keyword>
<keyword id="KW-0862">Zinc</keyword>